<organism>
    <name type="scientific">Streptomyces griseus subsp. griseus (strain JCM 4626 / CBS 651.72 / NBRC 13350 / KCC S-0626 / ISP 5235)</name>
    <dbReference type="NCBI Taxonomy" id="455632"/>
    <lineage>
        <taxon>Bacteria</taxon>
        <taxon>Bacillati</taxon>
        <taxon>Actinomycetota</taxon>
        <taxon>Actinomycetes</taxon>
        <taxon>Kitasatosporales</taxon>
        <taxon>Streptomycetaceae</taxon>
        <taxon>Streptomyces</taxon>
    </lineage>
</organism>
<proteinExistence type="inferred from homology"/>
<evidence type="ECO:0000255" key="1">
    <source>
        <dbReference type="HAMAP-Rule" id="MF_00500"/>
    </source>
</evidence>
<evidence type="ECO:0000256" key="2">
    <source>
        <dbReference type="SAM" id="MobiDB-lite"/>
    </source>
</evidence>
<evidence type="ECO:0000305" key="3"/>
<protein>
    <recommendedName>
        <fullName evidence="1">Small ribosomal subunit protein bS20</fullName>
    </recommendedName>
    <alternativeName>
        <fullName evidence="3">30S ribosomal protein S20</fullName>
    </alternativeName>
</protein>
<feature type="chain" id="PRO_1000126520" description="Small ribosomal subunit protein bS20">
    <location>
        <begin position="1"/>
        <end position="88"/>
    </location>
</feature>
<feature type="region of interest" description="Disordered" evidence="2">
    <location>
        <begin position="1"/>
        <end position="27"/>
    </location>
</feature>
<comment type="function">
    <text evidence="1">Binds directly to 16S ribosomal RNA.</text>
</comment>
<comment type="similarity">
    <text evidence="1">Belongs to the bacterial ribosomal protein bS20 family.</text>
</comment>
<accession>B1VY27</accession>
<sequence length="88" mass="9410">MANIKSQIKRNKTNEKARLRNKAVKSSLKTAIRKAREAVVAGDVEKATTAVRDASRQLDKAVSKGVIHKNAAANKKSALASKVASLQA</sequence>
<keyword id="KW-0687">Ribonucleoprotein</keyword>
<keyword id="KW-0689">Ribosomal protein</keyword>
<keyword id="KW-0694">RNA-binding</keyword>
<keyword id="KW-0699">rRNA-binding</keyword>
<dbReference type="EMBL" id="AP009493">
    <property type="protein sequence ID" value="BAG21812.1"/>
    <property type="molecule type" value="Genomic_DNA"/>
</dbReference>
<dbReference type="RefSeq" id="WP_003969243.1">
    <property type="nucleotide sequence ID" value="NC_010572.1"/>
</dbReference>
<dbReference type="SMR" id="B1VY27"/>
<dbReference type="GeneID" id="91315323"/>
<dbReference type="KEGG" id="sgr:SGR_4983"/>
<dbReference type="eggNOG" id="COG0268">
    <property type="taxonomic scope" value="Bacteria"/>
</dbReference>
<dbReference type="HOGENOM" id="CLU_160655_0_1_11"/>
<dbReference type="Proteomes" id="UP000001685">
    <property type="component" value="Chromosome"/>
</dbReference>
<dbReference type="GO" id="GO:0005829">
    <property type="term" value="C:cytosol"/>
    <property type="evidence" value="ECO:0007669"/>
    <property type="project" value="TreeGrafter"/>
</dbReference>
<dbReference type="GO" id="GO:0015935">
    <property type="term" value="C:small ribosomal subunit"/>
    <property type="evidence" value="ECO:0007669"/>
    <property type="project" value="TreeGrafter"/>
</dbReference>
<dbReference type="GO" id="GO:0070181">
    <property type="term" value="F:small ribosomal subunit rRNA binding"/>
    <property type="evidence" value="ECO:0007669"/>
    <property type="project" value="TreeGrafter"/>
</dbReference>
<dbReference type="GO" id="GO:0003735">
    <property type="term" value="F:structural constituent of ribosome"/>
    <property type="evidence" value="ECO:0007669"/>
    <property type="project" value="InterPro"/>
</dbReference>
<dbReference type="GO" id="GO:0006412">
    <property type="term" value="P:translation"/>
    <property type="evidence" value="ECO:0007669"/>
    <property type="project" value="UniProtKB-UniRule"/>
</dbReference>
<dbReference type="FunFam" id="1.20.58.110:FF:000001">
    <property type="entry name" value="30S ribosomal protein S20"/>
    <property type="match status" value="1"/>
</dbReference>
<dbReference type="Gene3D" id="1.20.58.110">
    <property type="entry name" value="Ribosomal protein S20"/>
    <property type="match status" value="1"/>
</dbReference>
<dbReference type="HAMAP" id="MF_00500">
    <property type="entry name" value="Ribosomal_bS20"/>
    <property type="match status" value="1"/>
</dbReference>
<dbReference type="InterPro" id="IPR002583">
    <property type="entry name" value="Ribosomal_bS20"/>
</dbReference>
<dbReference type="InterPro" id="IPR036510">
    <property type="entry name" value="Ribosomal_bS20_sf"/>
</dbReference>
<dbReference type="NCBIfam" id="TIGR00029">
    <property type="entry name" value="S20"/>
    <property type="match status" value="1"/>
</dbReference>
<dbReference type="PANTHER" id="PTHR33398">
    <property type="entry name" value="30S RIBOSOMAL PROTEIN S20"/>
    <property type="match status" value="1"/>
</dbReference>
<dbReference type="PANTHER" id="PTHR33398:SF1">
    <property type="entry name" value="SMALL RIBOSOMAL SUBUNIT PROTEIN BS20C"/>
    <property type="match status" value="1"/>
</dbReference>
<dbReference type="Pfam" id="PF01649">
    <property type="entry name" value="Ribosomal_S20p"/>
    <property type="match status" value="1"/>
</dbReference>
<dbReference type="SUPFAM" id="SSF46992">
    <property type="entry name" value="Ribosomal protein S20"/>
    <property type="match status" value="1"/>
</dbReference>
<gene>
    <name evidence="1" type="primary">rpsT</name>
    <name type="ordered locus">SGR_4983</name>
</gene>
<reference key="1">
    <citation type="journal article" date="2008" name="J. Bacteriol.">
        <title>Genome sequence of the streptomycin-producing microorganism Streptomyces griseus IFO 13350.</title>
        <authorList>
            <person name="Ohnishi Y."/>
            <person name="Ishikawa J."/>
            <person name="Hara H."/>
            <person name="Suzuki H."/>
            <person name="Ikenoya M."/>
            <person name="Ikeda H."/>
            <person name="Yamashita A."/>
            <person name="Hattori M."/>
            <person name="Horinouchi S."/>
        </authorList>
    </citation>
    <scope>NUCLEOTIDE SEQUENCE [LARGE SCALE GENOMIC DNA]</scope>
    <source>
        <strain>JCM 4626 / CBS 651.72 / NBRC 13350 / KCC S-0626 / ISP 5235</strain>
    </source>
</reference>
<name>RS20_STRGG</name>